<keyword id="KW-0066">ATP synthesis</keyword>
<keyword id="KW-0067">ATP-binding</keyword>
<keyword id="KW-0997">Cell inner membrane</keyword>
<keyword id="KW-1003">Cell membrane</keyword>
<keyword id="KW-0139">CF(1)</keyword>
<keyword id="KW-0375">Hydrogen ion transport</keyword>
<keyword id="KW-0406">Ion transport</keyword>
<keyword id="KW-0472">Membrane</keyword>
<keyword id="KW-0547">Nucleotide-binding</keyword>
<keyword id="KW-1278">Translocase</keyword>
<keyword id="KW-0813">Transport</keyword>
<sequence length="462" mass="50173">MQEGKISQIIGPVVDVDFPEGQLPAILDALSIAKPDGTKIVLETQQHLGEERVRTVAMESTDGLIRGMAVENTGRPIQAPVGEGVLGRMLNVVGDPIDGRGPVDAKKTYSIHRSAPKFEDLSTKAEMFETGIKVIDLLEPYSRGGKTGLFGGAGVGKTVLIMELINNIAKQQSGYSVFAGVGERTREGNDLWHEMMESGVIDKTALVFGQMNEPPGARARVALTGLSIAEYFRDEENRDVLLFIDNIFRFTQAGSEVSALLGRMPSAVGYQPTLATEMGELQDRITSTKNGSVTSVQAIYVPADDLTDPAPATAFAHLDATTVLSRSIAELGIYPAVDPLDSTSRILDPNIVGDDHYDTAQAVKMILQRYKDLQDIIAILGMDELSDEDKLVVSRARKVQRFLSQPFFVAEAFTGLSGKYVKLEETIKGFKEIIAGKHDNLPENAFYLVGTIEEAIEKAKTL</sequence>
<gene>
    <name evidence="1" type="primary">atpD</name>
    <name type="ordered locus">Cvib_0025</name>
</gene>
<proteinExistence type="inferred from homology"/>
<feature type="chain" id="PRO_1000086916" description="ATP synthase subunit beta">
    <location>
        <begin position="1"/>
        <end position="462"/>
    </location>
</feature>
<feature type="binding site" evidence="1">
    <location>
        <begin position="151"/>
        <end position="158"/>
    </location>
    <ligand>
        <name>ATP</name>
        <dbReference type="ChEBI" id="CHEBI:30616"/>
    </ligand>
</feature>
<accession>A4SC45</accession>
<organism>
    <name type="scientific">Chlorobium phaeovibrioides (strain DSM 265 / 1930)</name>
    <name type="common">Prosthecochloris vibrioformis (strain DSM 265)</name>
    <dbReference type="NCBI Taxonomy" id="290318"/>
    <lineage>
        <taxon>Bacteria</taxon>
        <taxon>Pseudomonadati</taxon>
        <taxon>Chlorobiota</taxon>
        <taxon>Chlorobiia</taxon>
        <taxon>Chlorobiales</taxon>
        <taxon>Chlorobiaceae</taxon>
        <taxon>Chlorobium/Pelodictyon group</taxon>
        <taxon>Chlorobium</taxon>
    </lineage>
</organism>
<evidence type="ECO:0000255" key="1">
    <source>
        <dbReference type="HAMAP-Rule" id="MF_01347"/>
    </source>
</evidence>
<reference key="1">
    <citation type="submission" date="2007-03" db="EMBL/GenBank/DDBJ databases">
        <title>Complete sequence of Prosthecochloris vibrioformis DSM 265.</title>
        <authorList>
            <consortium name="US DOE Joint Genome Institute"/>
            <person name="Copeland A."/>
            <person name="Lucas S."/>
            <person name="Lapidus A."/>
            <person name="Barry K."/>
            <person name="Detter J.C."/>
            <person name="Glavina del Rio T."/>
            <person name="Hammon N."/>
            <person name="Israni S."/>
            <person name="Pitluck S."/>
            <person name="Schmutz J."/>
            <person name="Larimer F."/>
            <person name="Land M."/>
            <person name="Hauser L."/>
            <person name="Mikhailova N."/>
            <person name="Li T."/>
            <person name="Overmann J."/>
            <person name="Schuster S.C."/>
            <person name="Bryant D.A."/>
            <person name="Richardson P."/>
        </authorList>
    </citation>
    <scope>NUCLEOTIDE SEQUENCE [LARGE SCALE GENOMIC DNA]</scope>
    <source>
        <strain>DSM 265 / 1930</strain>
    </source>
</reference>
<dbReference type="EC" id="7.1.2.2" evidence="1"/>
<dbReference type="EMBL" id="CP000607">
    <property type="protein sequence ID" value="ABP36054.1"/>
    <property type="molecule type" value="Genomic_DNA"/>
</dbReference>
<dbReference type="SMR" id="A4SC45"/>
<dbReference type="STRING" id="290318.Cvib_0025"/>
<dbReference type="KEGG" id="pvi:Cvib_0025"/>
<dbReference type="eggNOG" id="COG0055">
    <property type="taxonomic scope" value="Bacteria"/>
</dbReference>
<dbReference type="HOGENOM" id="CLU_022398_0_2_10"/>
<dbReference type="OrthoDB" id="9801639at2"/>
<dbReference type="GO" id="GO:0005886">
    <property type="term" value="C:plasma membrane"/>
    <property type="evidence" value="ECO:0007669"/>
    <property type="project" value="UniProtKB-SubCell"/>
</dbReference>
<dbReference type="GO" id="GO:0045259">
    <property type="term" value="C:proton-transporting ATP synthase complex"/>
    <property type="evidence" value="ECO:0007669"/>
    <property type="project" value="UniProtKB-KW"/>
</dbReference>
<dbReference type="GO" id="GO:0005524">
    <property type="term" value="F:ATP binding"/>
    <property type="evidence" value="ECO:0007669"/>
    <property type="project" value="UniProtKB-UniRule"/>
</dbReference>
<dbReference type="GO" id="GO:0016887">
    <property type="term" value="F:ATP hydrolysis activity"/>
    <property type="evidence" value="ECO:0007669"/>
    <property type="project" value="InterPro"/>
</dbReference>
<dbReference type="GO" id="GO:0046933">
    <property type="term" value="F:proton-transporting ATP synthase activity, rotational mechanism"/>
    <property type="evidence" value="ECO:0007669"/>
    <property type="project" value="UniProtKB-UniRule"/>
</dbReference>
<dbReference type="CDD" id="cd18110">
    <property type="entry name" value="ATP-synt_F1_beta_C"/>
    <property type="match status" value="1"/>
</dbReference>
<dbReference type="CDD" id="cd18115">
    <property type="entry name" value="ATP-synt_F1_beta_N"/>
    <property type="match status" value="1"/>
</dbReference>
<dbReference type="CDD" id="cd01133">
    <property type="entry name" value="F1-ATPase_beta_CD"/>
    <property type="match status" value="1"/>
</dbReference>
<dbReference type="FunFam" id="1.10.1140.10:FF:000001">
    <property type="entry name" value="ATP synthase subunit beta"/>
    <property type="match status" value="1"/>
</dbReference>
<dbReference type="FunFam" id="2.40.10.170:FF:000005">
    <property type="entry name" value="ATP synthase subunit beta"/>
    <property type="match status" value="1"/>
</dbReference>
<dbReference type="FunFam" id="3.40.50.300:FF:000026">
    <property type="entry name" value="ATP synthase subunit beta"/>
    <property type="match status" value="1"/>
</dbReference>
<dbReference type="Gene3D" id="2.40.10.170">
    <property type="match status" value="1"/>
</dbReference>
<dbReference type="Gene3D" id="1.10.1140.10">
    <property type="entry name" value="Bovine Mitochondrial F1-atpase, Atp Synthase Beta Chain, Chain D, domain 3"/>
    <property type="match status" value="1"/>
</dbReference>
<dbReference type="Gene3D" id="3.40.50.300">
    <property type="entry name" value="P-loop containing nucleotide triphosphate hydrolases"/>
    <property type="match status" value="1"/>
</dbReference>
<dbReference type="HAMAP" id="MF_01347">
    <property type="entry name" value="ATP_synth_beta_bact"/>
    <property type="match status" value="1"/>
</dbReference>
<dbReference type="InterPro" id="IPR003593">
    <property type="entry name" value="AAA+_ATPase"/>
</dbReference>
<dbReference type="InterPro" id="IPR055190">
    <property type="entry name" value="ATP-synt_VA_C"/>
</dbReference>
<dbReference type="InterPro" id="IPR005722">
    <property type="entry name" value="ATP_synth_F1_bsu"/>
</dbReference>
<dbReference type="InterPro" id="IPR020003">
    <property type="entry name" value="ATPase_a/bsu_AS"/>
</dbReference>
<dbReference type="InterPro" id="IPR050053">
    <property type="entry name" value="ATPase_alpha/beta_chains"/>
</dbReference>
<dbReference type="InterPro" id="IPR004100">
    <property type="entry name" value="ATPase_F1/V1/A1_a/bsu_N"/>
</dbReference>
<dbReference type="InterPro" id="IPR036121">
    <property type="entry name" value="ATPase_F1/V1/A1_a/bsu_N_sf"/>
</dbReference>
<dbReference type="InterPro" id="IPR000194">
    <property type="entry name" value="ATPase_F1/V1/A1_a/bsu_nucl-bd"/>
</dbReference>
<dbReference type="InterPro" id="IPR024034">
    <property type="entry name" value="ATPase_F1/V1_b/a_C"/>
</dbReference>
<dbReference type="InterPro" id="IPR027417">
    <property type="entry name" value="P-loop_NTPase"/>
</dbReference>
<dbReference type="NCBIfam" id="TIGR01039">
    <property type="entry name" value="atpD"/>
    <property type="match status" value="1"/>
</dbReference>
<dbReference type="PANTHER" id="PTHR15184">
    <property type="entry name" value="ATP SYNTHASE"/>
    <property type="match status" value="1"/>
</dbReference>
<dbReference type="PANTHER" id="PTHR15184:SF71">
    <property type="entry name" value="ATP SYNTHASE SUBUNIT BETA, MITOCHONDRIAL"/>
    <property type="match status" value="1"/>
</dbReference>
<dbReference type="Pfam" id="PF00006">
    <property type="entry name" value="ATP-synt_ab"/>
    <property type="match status" value="1"/>
</dbReference>
<dbReference type="Pfam" id="PF02874">
    <property type="entry name" value="ATP-synt_ab_N"/>
    <property type="match status" value="1"/>
</dbReference>
<dbReference type="Pfam" id="PF22919">
    <property type="entry name" value="ATP-synt_VA_C"/>
    <property type="match status" value="1"/>
</dbReference>
<dbReference type="PIRSF" id="PIRSF039072">
    <property type="entry name" value="ATPase_subunit_beta"/>
    <property type="match status" value="1"/>
</dbReference>
<dbReference type="SMART" id="SM00382">
    <property type="entry name" value="AAA"/>
    <property type="match status" value="1"/>
</dbReference>
<dbReference type="SUPFAM" id="SSF47917">
    <property type="entry name" value="C-terminal domain of alpha and beta subunits of F1 ATP synthase"/>
    <property type="match status" value="1"/>
</dbReference>
<dbReference type="SUPFAM" id="SSF50615">
    <property type="entry name" value="N-terminal domain of alpha and beta subunits of F1 ATP synthase"/>
    <property type="match status" value="1"/>
</dbReference>
<dbReference type="SUPFAM" id="SSF52540">
    <property type="entry name" value="P-loop containing nucleoside triphosphate hydrolases"/>
    <property type="match status" value="1"/>
</dbReference>
<dbReference type="PROSITE" id="PS00152">
    <property type="entry name" value="ATPASE_ALPHA_BETA"/>
    <property type="match status" value="1"/>
</dbReference>
<name>ATPB_CHLPM</name>
<protein>
    <recommendedName>
        <fullName evidence="1">ATP synthase subunit beta</fullName>
        <ecNumber evidence="1">7.1.2.2</ecNumber>
    </recommendedName>
    <alternativeName>
        <fullName evidence="1">ATP synthase F1 sector subunit beta</fullName>
    </alternativeName>
    <alternativeName>
        <fullName evidence="1">F-ATPase subunit beta</fullName>
    </alternativeName>
</protein>
<comment type="function">
    <text evidence="1">Produces ATP from ADP in the presence of a proton gradient across the membrane. The catalytic sites are hosted primarily by the beta subunits.</text>
</comment>
<comment type="catalytic activity">
    <reaction evidence="1">
        <text>ATP + H2O + 4 H(+)(in) = ADP + phosphate + 5 H(+)(out)</text>
        <dbReference type="Rhea" id="RHEA:57720"/>
        <dbReference type="ChEBI" id="CHEBI:15377"/>
        <dbReference type="ChEBI" id="CHEBI:15378"/>
        <dbReference type="ChEBI" id="CHEBI:30616"/>
        <dbReference type="ChEBI" id="CHEBI:43474"/>
        <dbReference type="ChEBI" id="CHEBI:456216"/>
        <dbReference type="EC" id="7.1.2.2"/>
    </reaction>
</comment>
<comment type="subunit">
    <text evidence="1">F-type ATPases have 2 components, CF(1) - the catalytic core - and CF(0) - the membrane proton channel. CF(1) has five subunits: alpha(3), beta(3), gamma(1), delta(1), epsilon(1). CF(0) has four main subunits: a(1), b(1), b'(1) and c(9-12).</text>
</comment>
<comment type="subcellular location">
    <subcellularLocation>
        <location evidence="1">Cell inner membrane</location>
        <topology evidence="1">Peripheral membrane protein</topology>
    </subcellularLocation>
</comment>
<comment type="similarity">
    <text evidence="1">Belongs to the ATPase alpha/beta chains family.</text>
</comment>